<evidence type="ECO:0000250" key="1"/>
<evidence type="ECO:0000255" key="2"/>
<evidence type="ECO:0000256" key="3">
    <source>
        <dbReference type="SAM" id="MobiDB-lite"/>
    </source>
</evidence>
<evidence type="ECO:0000303" key="4">
    <source ref="2"/>
</evidence>
<evidence type="ECO:0000305" key="5"/>
<reference key="1">
    <citation type="journal article" date="2004" name="Proc. Natl. Acad. Sci. U.S.A.">
        <title>Identification of 315 genes essential for early zebrafish development.</title>
        <authorList>
            <person name="Amsterdam A."/>
            <person name="Nissen R.M."/>
            <person name="Sun Z."/>
            <person name="Swindell E.C."/>
            <person name="Farrington S."/>
            <person name="Hopkins N."/>
        </authorList>
    </citation>
    <scope>NUCLEOTIDE SEQUENCE [LARGE SCALE MRNA] (ISOFORM 1)</scope>
</reference>
<reference key="2">
    <citation type="submission" date="2004-07" db="EMBL/GenBank/DDBJ databases">
        <authorList>
            <consortium name="NIH - Zebrafish Gene Collection (ZGC) project"/>
        </authorList>
    </citation>
    <scope>NUCLEOTIDE SEQUENCE [LARGE SCALE MRNA] OF 1-483 (ISOFORM 2)</scope>
    <source>
        <tissue>Embryo</tissue>
    </source>
</reference>
<protein>
    <recommendedName>
        <fullName>Nucleolar complex protein 3 homolog</fullName>
        <shortName>NOC3 protein homolog</shortName>
    </recommendedName>
    <alternativeName>
        <fullName>NOC3-like protein</fullName>
    </alternativeName>
    <alternativeName>
        <fullName>Nucleolar complex-associated protein 3-like protein</fullName>
    </alternativeName>
</protein>
<name>NOC3L_DANRE</name>
<dbReference type="EMBL" id="AY648726">
    <property type="protein sequence ID" value="AAT68044.1"/>
    <property type="molecule type" value="mRNA"/>
</dbReference>
<dbReference type="EMBL" id="BC078188">
    <property type="protein sequence ID" value="AAH78188.1"/>
    <property type="status" value="ALT_SEQ"/>
    <property type="molecule type" value="mRNA"/>
</dbReference>
<dbReference type="RefSeq" id="NP_001002863.1">
    <molecule id="Q6DRN3-1"/>
    <property type="nucleotide sequence ID" value="NM_001002863.1"/>
</dbReference>
<dbReference type="SMR" id="Q6DRN3"/>
<dbReference type="FunCoup" id="Q6DRN3">
    <property type="interactions" value="2677"/>
</dbReference>
<dbReference type="STRING" id="7955.ENSDARP00000004350"/>
<dbReference type="PaxDb" id="7955-ENSDARP00000004350"/>
<dbReference type="Ensembl" id="ENSDART00000028043">
    <molecule id="Q6DRN3-1"/>
    <property type="protein sequence ID" value="ENSDARP00000004350"/>
    <property type="gene ID" value="ENSDARG00000002487"/>
</dbReference>
<dbReference type="GeneID" id="321289"/>
<dbReference type="KEGG" id="dre:321289"/>
<dbReference type="AGR" id="ZFIN:ZDB-GENE-030131-9878"/>
<dbReference type="CTD" id="64318"/>
<dbReference type="ZFIN" id="ZDB-GENE-030131-9878">
    <property type="gene designation" value="noc3l"/>
</dbReference>
<dbReference type="eggNOG" id="KOG2153">
    <property type="taxonomic scope" value="Eukaryota"/>
</dbReference>
<dbReference type="HOGENOM" id="CLU_012441_2_1_1"/>
<dbReference type="InParanoid" id="Q6DRN3"/>
<dbReference type="OMA" id="HYCPQVR"/>
<dbReference type="OrthoDB" id="10263597at2759"/>
<dbReference type="PhylomeDB" id="Q6DRN3"/>
<dbReference type="TreeFam" id="TF318817"/>
<dbReference type="PRO" id="PR:Q6DRN3"/>
<dbReference type="Proteomes" id="UP000000437">
    <property type="component" value="Chromosome 12"/>
</dbReference>
<dbReference type="Bgee" id="ENSDARG00000002487">
    <property type="expression patterns" value="Expressed in presomitic mesoderm and 42 other cell types or tissues"/>
</dbReference>
<dbReference type="ExpressionAtlas" id="Q6DRN3">
    <property type="expression patterns" value="baseline"/>
</dbReference>
<dbReference type="GO" id="GO:0005730">
    <property type="term" value="C:nucleolus"/>
    <property type="evidence" value="ECO:0000318"/>
    <property type="project" value="GO_Central"/>
</dbReference>
<dbReference type="GO" id="GO:0005634">
    <property type="term" value="C:nucleus"/>
    <property type="evidence" value="ECO:0000314"/>
    <property type="project" value="ZFIN"/>
</dbReference>
<dbReference type="GO" id="GO:0003682">
    <property type="term" value="F:chromatin binding"/>
    <property type="evidence" value="ECO:0000318"/>
    <property type="project" value="GO_Central"/>
</dbReference>
<dbReference type="GO" id="GO:0006270">
    <property type="term" value="P:DNA replication initiation"/>
    <property type="evidence" value="ECO:0000318"/>
    <property type="project" value="GO_Central"/>
</dbReference>
<dbReference type="GO" id="GO:0007517">
    <property type="term" value="P:muscle organ development"/>
    <property type="evidence" value="ECO:0000315"/>
    <property type="project" value="ZFIN"/>
</dbReference>
<dbReference type="GO" id="GO:0019216">
    <property type="term" value="P:regulation of lipid metabolic process"/>
    <property type="evidence" value="ECO:0000315"/>
    <property type="project" value="ZFIN"/>
</dbReference>
<dbReference type="Gene3D" id="1.25.10.10">
    <property type="entry name" value="Leucine-rich Repeat Variant"/>
    <property type="match status" value="1"/>
</dbReference>
<dbReference type="InterPro" id="IPR011989">
    <property type="entry name" value="ARM-like"/>
</dbReference>
<dbReference type="InterPro" id="IPR016024">
    <property type="entry name" value="ARM-type_fold"/>
</dbReference>
<dbReference type="InterPro" id="IPR005612">
    <property type="entry name" value="CCAAT-binding_factor"/>
</dbReference>
<dbReference type="InterPro" id="IPR011501">
    <property type="entry name" value="Noc3_N"/>
</dbReference>
<dbReference type="InterPro" id="IPR016903">
    <property type="entry name" value="Nucleolar_cplx-assoc_3"/>
</dbReference>
<dbReference type="PANTHER" id="PTHR14428">
    <property type="entry name" value="NUCLEOLAR COMPLEX PROTEIN 3"/>
    <property type="match status" value="1"/>
</dbReference>
<dbReference type="PANTHER" id="PTHR14428:SF5">
    <property type="entry name" value="NUCLEOLAR COMPLEX PROTEIN 3 HOMOLOG"/>
    <property type="match status" value="1"/>
</dbReference>
<dbReference type="Pfam" id="PF03914">
    <property type="entry name" value="CBF"/>
    <property type="match status" value="1"/>
</dbReference>
<dbReference type="Pfam" id="PF07540">
    <property type="entry name" value="NOC3p"/>
    <property type="match status" value="1"/>
</dbReference>
<dbReference type="PIRSF" id="PIRSF028977">
    <property type="entry name" value="Nucleolar_complex_p3"/>
    <property type="match status" value="1"/>
</dbReference>
<dbReference type="SUPFAM" id="SSF48371">
    <property type="entry name" value="ARM repeat"/>
    <property type="match status" value="1"/>
</dbReference>
<proteinExistence type="evidence at transcript level"/>
<comment type="subcellular location">
    <subcellularLocation>
        <location evidence="1">Nucleus</location>
        <location evidence="1">Nucleolus</location>
    </subcellularLocation>
</comment>
<comment type="alternative products">
    <event type="alternative splicing"/>
    <isoform>
        <id>Q6DRN3-1</id>
        <name>1</name>
        <sequence type="displayed"/>
    </isoform>
    <isoform>
        <id>Q6DRN3-2</id>
        <name>2</name>
        <sequence type="described" ref="VSP_015759"/>
    </isoform>
</comment>
<comment type="similarity">
    <text evidence="5">Belongs to the CBF/MAK21 family.</text>
</comment>
<comment type="sequence caution" evidence="5">
    <conflict type="miscellaneous discrepancy">
        <sequence resource="EMBL-CDS" id="AAH78188"/>
    </conflict>
    <text>Contaminating sequence. Potential poly-A sequence.</text>
</comment>
<keyword id="KW-0025">Alternative splicing</keyword>
<keyword id="KW-0175">Coiled coil</keyword>
<keyword id="KW-0539">Nucleus</keyword>
<keyword id="KW-1185">Reference proteome</keyword>
<organism>
    <name type="scientific">Danio rerio</name>
    <name type="common">Zebrafish</name>
    <name type="synonym">Brachydanio rerio</name>
    <dbReference type="NCBI Taxonomy" id="7955"/>
    <lineage>
        <taxon>Eukaryota</taxon>
        <taxon>Metazoa</taxon>
        <taxon>Chordata</taxon>
        <taxon>Craniata</taxon>
        <taxon>Vertebrata</taxon>
        <taxon>Euteleostomi</taxon>
        <taxon>Actinopterygii</taxon>
        <taxon>Neopterygii</taxon>
        <taxon>Teleostei</taxon>
        <taxon>Ostariophysi</taxon>
        <taxon>Cypriniformes</taxon>
        <taxon>Danionidae</taxon>
        <taxon>Danioninae</taxon>
        <taxon>Danio</taxon>
    </lineage>
</organism>
<feature type="chain" id="PRO_0000173477" description="Nucleolar complex protein 3 homolog">
    <location>
        <begin position="1"/>
        <end position="800"/>
    </location>
</feature>
<feature type="region of interest" description="Disordered" evidence="3">
    <location>
        <begin position="1"/>
        <end position="91"/>
    </location>
</feature>
<feature type="region of interest" description="Disordered" evidence="3">
    <location>
        <begin position="167"/>
        <end position="197"/>
    </location>
</feature>
<feature type="region of interest" description="Disordered" evidence="3">
    <location>
        <begin position="780"/>
        <end position="800"/>
    </location>
</feature>
<feature type="coiled-coil region" evidence="2">
    <location>
        <begin position="449"/>
        <end position="490"/>
    </location>
</feature>
<feature type="compositionally biased region" description="Basic residues" evidence="3">
    <location>
        <begin position="1"/>
        <end position="19"/>
    </location>
</feature>
<feature type="compositionally biased region" description="Basic residues" evidence="3">
    <location>
        <begin position="42"/>
        <end position="53"/>
    </location>
</feature>
<feature type="compositionally biased region" description="Basic and acidic residues" evidence="3">
    <location>
        <begin position="65"/>
        <end position="74"/>
    </location>
</feature>
<feature type="compositionally biased region" description="Polar residues" evidence="3">
    <location>
        <begin position="789"/>
        <end position="800"/>
    </location>
</feature>
<feature type="splice variant" id="VSP_015759" description="In isoform 2." evidence="4">
    <location>
        <position position="174"/>
    </location>
</feature>
<feature type="sequence conflict" description="In Ref. 2; AAH78188." evidence="5" ref="2">
    <original>H</original>
    <variation>R</variation>
    <location>
        <position position="124"/>
    </location>
</feature>
<accession>Q6DRN3</accession>
<accession>Q6DC88</accession>
<gene>
    <name type="primary">noc3l</name>
</gene>
<sequence length="800" mass="92097">MGPASKRNKKKRPSFRKLLKTSNLKLENKLKNRQFKQQSSAKKQRKEQRKLHKAISDVSHQTLKPLERYKKRPEDEEEEEEFLESLPTDMMDEDDLEHIRAIAQKASFLTRDLSSCAPVHAKKHKSEQALENYEKMPRKMQQEEEKELIHLLPIKDKSGLIPQSMEKPVLPQAEEEEEEPNQEVYLQKEEEPESAPLLTPQEQFEQRAQKLMEKKLRIAALSSAILADPHVNIKKLKELRAMLMETDPCVAVTVRKLVMVSLMEVFKDIVPAYRIRPLTEEEKAAKVKKETLQLREFEEGLVSQYKFYLEELEQTVKDWKQKKEKRSQAVSLQSYKGLAEVAVRCICELLVALPHFNFHNNIIVMLVPLMNDSDKKVSEMCCEAVKKLLKQDKVGQASLAMVKVISGMVKSRNYRIKPVVLNCLLCLRIKEVDMKKDTEDTAPKKKFMSFKEKRKNLSRMQRKWKKAEEKLQKELLEAEATESKEKKIKLHTETLNVVFLIYFRILKKAQKSVLLSSVLEGLAKFAHLINLEFFDDLLAVLYNLITSGDLTYRESLHCILTSFHILSGQGDVLNIDPLKFYSHLYRTLLTLHAGGVNEDTVIVLQCLDVMLSKRRKQVTLQRAQAFLKRLNTVALHLLPDSCVGILAANRMLMQTFPKCDILLDNETQGSGVYLPELDVPEYCNPQNTALWELHLLKSHYHPVVRKFAAHLMKGAPSEGSGALGVELSRRSPLQLFEDYSVKDMSFNPPVAGPPSKKKEYFTIGHAFLHSELSRQIDAALQEEPEQMSLDFTSPHTQQEP</sequence>